<organism>
    <name type="scientific">Homo sapiens</name>
    <name type="common">Human</name>
    <dbReference type="NCBI Taxonomy" id="9606"/>
    <lineage>
        <taxon>Eukaryota</taxon>
        <taxon>Metazoa</taxon>
        <taxon>Chordata</taxon>
        <taxon>Craniata</taxon>
        <taxon>Vertebrata</taxon>
        <taxon>Euteleostomi</taxon>
        <taxon>Mammalia</taxon>
        <taxon>Eutheria</taxon>
        <taxon>Euarchontoglires</taxon>
        <taxon>Primates</taxon>
        <taxon>Haplorrhini</taxon>
        <taxon>Catarrhini</taxon>
        <taxon>Hominidae</taxon>
        <taxon>Homo</taxon>
    </lineage>
</organism>
<name>PAR6A_HUMAN</name>
<keyword id="KW-0002">3D-structure</keyword>
<keyword id="KW-0025">Alternative splicing</keyword>
<keyword id="KW-0131">Cell cycle</keyword>
<keyword id="KW-0132">Cell division</keyword>
<keyword id="KW-0965">Cell junction</keyword>
<keyword id="KW-1003">Cell membrane</keyword>
<keyword id="KW-0966">Cell projection</keyword>
<keyword id="KW-0963">Cytoplasm</keyword>
<keyword id="KW-0206">Cytoskeleton</keyword>
<keyword id="KW-0472">Membrane</keyword>
<keyword id="KW-0597">Phosphoprotein</keyword>
<keyword id="KW-1267">Proteomics identification</keyword>
<keyword id="KW-1185">Reference proteome</keyword>
<keyword id="KW-0796">Tight junction</keyword>
<keyword id="KW-0832">Ubl conjugation</keyword>
<proteinExistence type="evidence at protein level"/>
<sequence length="346" mass="37388">MARPQRTPARSPDSIVEVKSKFDAEFRRFALPRASVSGFQEFSRLLRAVHQIPGLDVLLGYTDAHGDLLPLTNDDSLHRALASGPPPLRLLVQKRAEADSSGLAFASNSLQRRKKGLLLRPVAPLRTRPPLLISLPQDFRQVSSVIDVDLLPETHRRVRLHKHGSDRPLGFYIRDGMSVRVAPQGLERVPGIFISRLVRGGLAESTGLLAVSDEILEVNGIEVAGKTLDQVTDMMVANSHNLIVTVKPANQRNNVVRGASGRLTGPPSAGPGPAEPDSDDDSSDLVIENRQPPSSNGLSQGPPCWDLHPGCRHPGTRSSLPSLDDQEQASSGWGSRIRGDGSGFSL</sequence>
<dbReference type="EMBL" id="AJ277095">
    <property type="protein sequence ID" value="CAB85490.1"/>
    <property type="molecule type" value="mRNA"/>
</dbReference>
<dbReference type="EMBL" id="AF265565">
    <property type="protein sequence ID" value="AAF75548.1"/>
    <property type="molecule type" value="mRNA"/>
</dbReference>
<dbReference type="EMBL" id="AF252292">
    <property type="protein sequence ID" value="AAF71529.1"/>
    <property type="molecule type" value="mRNA"/>
</dbReference>
<dbReference type="EMBL" id="AB043634">
    <property type="protein sequence ID" value="BAA96235.1"/>
    <property type="molecule type" value="mRNA"/>
</dbReference>
<dbReference type="EMBL" id="AB041642">
    <property type="protein sequence ID" value="BAB16105.1"/>
    <property type="molecule type" value="mRNA"/>
</dbReference>
<dbReference type="EMBL" id="BC015626">
    <property type="protein sequence ID" value="AAH15626.1"/>
    <property type="molecule type" value="mRNA"/>
</dbReference>
<dbReference type="EMBL" id="AF028827">
    <property type="protein sequence ID" value="AAB84252.1"/>
    <property type="molecule type" value="mRNA"/>
</dbReference>
<dbReference type="CCDS" id="CCDS10843.1">
    <molecule id="Q9NPB6-1"/>
</dbReference>
<dbReference type="CCDS" id="CCDS45514.1">
    <molecule id="Q9NPB6-2"/>
</dbReference>
<dbReference type="RefSeq" id="NP_001032358.1">
    <molecule id="Q9NPB6-2"/>
    <property type="nucleotide sequence ID" value="NM_001037281.2"/>
</dbReference>
<dbReference type="RefSeq" id="NP_058644.1">
    <molecule id="Q9NPB6-1"/>
    <property type="nucleotide sequence ID" value="NM_016948.3"/>
</dbReference>
<dbReference type="PDB" id="1WMH">
    <property type="method" value="X-ray"/>
    <property type="resolution" value="1.50 A"/>
    <property type="chains" value="B=14-95"/>
</dbReference>
<dbReference type="PDBsum" id="1WMH"/>
<dbReference type="EMDB" id="EMD-18877"/>
<dbReference type="SMR" id="Q9NPB6"/>
<dbReference type="BioGRID" id="119157">
    <property type="interactions" value="61"/>
</dbReference>
<dbReference type="ComplexPortal" id="CPX-6183">
    <property type="entry name" value="PAR cell polarity complex, PARD6A-PRKCI variant"/>
</dbReference>
<dbReference type="ComplexPortal" id="CPX-6197">
    <property type="entry name" value="PAR cell polarity complex, PARD6A-PRKCZ variant"/>
</dbReference>
<dbReference type="CORUM" id="Q9NPB6"/>
<dbReference type="DIP" id="DIP-31312N"/>
<dbReference type="FunCoup" id="Q9NPB6">
    <property type="interactions" value="1500"/>
</dbReference>
<dbReference type="IntAct" id="Q9NPB6">
    <property type="interactions" value="46"/>
</dbReference>
<dbReference type="MINT" id="Q9NPB6"/>
<dbReference type="STRING" id="9606.ENSP00000219255"/>
<dbReference type="iPTMnet" id="Q9NPB6"/>
<dbReference type="PhosphoSitePlus" id="Q9NPB6"/>
<dbReference type="BioMuta" id="PARD6A"/>
<dbReference type="DMDM" id="30913215"/>
<dbReference type="jPOST" id="Q9NPB6"/>
<dbReference type="MassIVE" id="Q9NPB6"/>
<dbReference type="PaxDb" id="9606-ENSP00000219255"/>
<dbReference type="PeptideAtlas" id="Q9NPB6"/>
<dbReference type="ProteomicsDB" id="81959">
    <molecule id="Q9NPB6-1"/>
</dbReference>
<dbReference type="ProteomicsDB" id="81960">
    <molecule id="Q9NPB6-2"/>
</dbReference>
<dbReference type="Antibodypedia" id="4052">
    <property type="antibodies" value="277 antibodies from 33 providers"/>
</dbReference>
<dbReference type="DNASU" id="50855"/>
<dbReference type="Ensembl" id="ENST00000219255.3">
    <molecule id="Q9NPB6-1"/>
    <property type="protein sequence ID" value="ENSP00000219255.3"/>
    <property type="gene ID" value="ENSG00000102981.10"/>
</dbReference>
<dbReference type="Ensembl" id="ENST00000458121.7">
    <molecule id="Q9NPB6-2"/>
    <property type="protein sequence ID" value="ENSP00000392388.1"/>
    <property type="gene ID" value="ENSG00000102981.10"/>
</dbReference>
<dbReference type="GeneID" id="50855"/>
<dbReference type="KEGG" id="hsa:50855"/>
<dbReference type="MANE-Select" id="ENST00000458121.7">
    <molecule id="Q9NPB6-2"/>
    <property type="protein sequence ID" value="ENSP00000392388.1"/>
    <property type="RefSeq nucleotide sequence ID" value="NM_001037281.2"/>
    <property type="RefSeq protein sequence ID" value="NP_001032358.1"/>
</dbReference>
<dbReference type="UCSC" id="uc002ets.3">
    <molecule id="Q9NPB6-1"/>
    <property type="organism name" value="human"/>
</dbReference>
<dbReference type="AGR" id="HGNC:15943"/>
<dbReference type="CTD" id="50855"/>
<dbReference type="DisGeNET" id="50855"/>
<dbReference type="GeneCards" id="PARD6A"/>
<dbReference type="HGNC" id="HGNC:15943">
    <property type="gene designation" value="PARD6A"/>
</dbReference>
<dbReference type="HPA" id="ENSG00000102981">
    <property type="expression patterns" value="Tissue enhanced (brain, testis)"/>
</dbReference>
<dbReference type="MIM" id="607484">
    <property type="type" value="gene"/>
</dbReference>
<dbReference type="neXtProt" id="NX_Q9NPB6"/>
<dbReference type="OpenTargets" id="ENSG00000102981"/>
<dbReference type="PharmGKB" id="PA32937"/>
<dbReference type="VEuPathDB" id="HostDB:ENSG00000102981"/>
<dbReference type="eggNOG" id="KOG3606">
    <property type="taxonomic scope" value="Eukaryota"/>
</dbReference>
<dbReference type="GeneTree" id="ENSGT00950000183211"/>
<dbReference type="HOGENOM" id="CLU_040653_0_0_1"/>
<dbReference type="InParanoid" id="Q9NPB6"/>
<dbReference type="OMA" id="SQGSPCW"/>
<dbReference type="OrthoDB" id="5868434at2759"/>
<dbReference type="PAN-GO" id="Q9NPB6">
    <property type="GO annotations" value="7 GO annotations based on evolutionary models"/>
</dbReference>
<dbReference type="PhylomeDB" id="Q9NPB6"/>
<dbReference type="TreeFam" id="TF312899"/>
<dbReference type="PathwayCommons" id="Q9NPB6"/>
<dbReference type="Reactome" id="R-HSA-2173791">
    <property type="pathway name" value="TGF-beta receptor signaling in EMT (epithelial to mesenchymal transition)"/>
</dbReference>
<dbReference type="Reactome" id="R-HSA-420029">
    <property type="pathway name" value="Tight junction interactions"/>
</dbReference>
<dbReference type="Reactome" id="R-HSA-4608870">
    <property type="pathway name" value="Asymmetric localization of PCP proteins"/>
</dbReference>
<dbReference type="Reactome" id="R-HSA-9013148">
    <property type="pathway name" value="CDC42 GTPase cycle"/>
</dbReference>
<dbReference type="Reactome" id="R-HSA-9013149">
    <property type="pathway name" value="RAC1 GTPase cycle"/>
</dbReference>
<dbReference type="Reactome" id="R-HSA-9013420">
    <property type="pathway name" value="RHOU GTPase cycle"/>
</dbReference>
<dbReference type="Reactome" id="R-HSA-9013424">
    <property type="pathway name" value="RHOV GTPase cycle"/>
</dbReference>
<dbReference type="SignaLink" id="Q9NPB6"/>
<dbReference type="SIGNOR" id="Q9NPB6"/>
<dbReference type="BioGRID-ORCS" id="50855">
    <property type="hits" value="13 hits in 1151 CRISPR screens"/>
</dbReference>
<dbReference type="CD-CODE" id="8C2F96ED">
    <property type="entry name" value="Centrosome"/>
</dbReference>
<dbReference type="ChiTaRS" id="PARD6A">
    <property type="organism name" value="human"/>
</dbReference>
<dbReference type="EvolutionaryTrace" id="Q9NPB6"/>
<dbReference type="GeneWiki" id="PARD6A"/>
<dbReference type="GenomeRNAi" id="50855"/>
<dbReference type="Pharos" id="Q9NPB6">
    <property type="development level" value="Tbio"/>
</dbReference>
<dbReference type="PRO" id="PR:Q9NPB6"/>
<dbReference type="Proteomes" id="UP000005640">
    <property type="component" value="Chromosome 16"/>
</dbReference>
<dbReference type="RNAct" id="Q9NPB6">
    <property type="molecule type" value="protein"/>
</dbReference>
<dbReference type="Bgee" id="ENSG00000102981">
    <property type="expression patterns" value="Expressed in right hemisphere of cerebellum and 164 other cell types or tissues"/>
</dbReference>
<dbReference type="ExpressionAtlas" id="Q9NPB6">
    <property type="expression patterns" value="baseline and differential"/>
</dbReference>
<dbReference type="GO" id="GO:0016324">
    <property type="term" value="C:apical plasma membrane"/>
    <property type="evidence" value="ECO:0000318"/>
    <property type="project" value="GO_Central"/>
</dbReference>
<dbReference type="GO" id="GO:0005923">
    <property type="term" value="C:bicellular tight junction"/>
    <property type="evidence" value="ECO:0000250"/>
    <property type="project" value="UniProtKB"/>
</dbReference>
<dbReference type="GO" id="GO:0005938">
    <property type="term" value="C:cell cortex"/>
    <property type="evidence" value="ECO:0000318"/>
    <property type="project" value="GO_Central"/>
</dbReference>
<dbReference type="GO" id="GO:0034451">
    <property type="term" value="C:centriolar satellite"/>
    <property type="evidence" value="ECO:0000314"/>
    <property type="project" value="UniProtKB"/>
</dbReference>
<dbReference type="GO" id="GO:0005813">
    <property type="term" value="C:centrosome"/>
    <property type="evidence" value="ECO:0000314"/>
    <property type="project" value="UniProtKB"/>
</dbReference>
<dbReference type="GO" id="GO:0005829">
    <property type="term" value="C:cytosol"/>
    <property type="evidence" value="ECO:0000304"/>
    <property type="project" value="Reactome"/>
</dbReference>
<dbReference type="GO" id="GO:0005634">
    <property type="term" value="C:nucleus"/>
    <property type="evidence" value="ECO:0000250"/>
    <property type="project" value="UniProtKB"/>
</dbReference>
<dbReference type="GO" id="GO:0120157">
    <property type="term" value="C:PAR polarity complex"/>
    <property type="evidence" value="ECO:0000353"/>
    <property type="project" value="ComplexPortal"/>
</dbReference>
<dbReference type="GO" id="GO:0005886">
    <property type="term" value="C:plasma membrane"/>
    <property type="evidence" value="ECO:0000304"/>
    <property type="project" value="Reactome"/>
</dbReference>
<dbReference type="GO" id="GO:0001726">
    <property type="term" value="C:ruffle"/>
    <property type="evidence" value="ECO:0007669"/>
    <property type="project" value="UniProtKB-SubCell"/>
</dbReference>
<dbReference type="GO" id="GO:0070160">
    <property type="term" value="C:tight junction"/>
    <property type="evidence" value="ECO:0000303"/>
    <property type="project" value="ComplexPortal"/>
</dbReference>
<dbReference type="GO" id="GO:0030742">
    <property type="term" value="F:GTP-dependent protein binding"/>
    <property type="evidence" value="ECO:0000250"/>
    <property type="project" value="UniProtKB"/>
</dbReference>
<dbReference type="GO" id="GO:0031267">
    <property type="term" value="F:small GTPase binding"/>
    <property type="evidence" value="ECO:0000250"/>
    <property type="project" value="UniProtKB"/>
</dbReference>
<dbReference type="GO" id="GO:0051301">
    <property type="term" value="P:cell division"/>
    <property type="evidence" value="ECO:0007669"/>
    <property type="project" value="UniProtKB-KW"/>
</dbReference>
<dbReference type="GO" id="GO:0045217">
    <property type="term" value="P:cell-cell junction maintenance"/>
    <property type="evidence" value="ECO:0000250"/>
    <property type="project" value="UniProtKB"/>
</dbReference>
<dbReference type="GO" id="GO:0007098">
    <property type="term" value="P:centrosome cycle"/>
    <property type="evidence" value="ECO:0000315"/>
    <property type="project" value="UniProtKB"/>
</dbReference>
<dbReference type="GO" id="GO:0007163">
    <property type="term" value="P:establishment or maintenance of cell polarity"/>
    <property type="evidence" value="ECO:0000318"/>
    <property type="project" value="GO_Central"/>
</dbReference>
<dbReference type="GO" id="GO:0045197">
    <property type="term" value="P:establishment or maintenance of epithelial cell apical/basal polarity"/>
    <property type="evidence" value="ECO:0000314"/>
    <property type="project" value="ComplexPortal"/>
</dbReference>
<dbReference type="GO" id="GO:1904781">
    <property type="term" value="P:positive regulation of protein localization to centrosome"/>
    <property type="evidence" value="ECO:0000315"/>
    <property type="project" value="UniProtKB"/>
</dbReference>
<dbReference type="GO" id="GO:0050714">
    <property type="term" value="P:positive regulation of protein secretion"/>
    <property type="evidence" value="ECO:0007669"/>
    <property type="project" value="Ensembl"/>
</dbReference>
<dbReference type="GO" id="GO:0060341">
    <property type="term" value="P:regulation of cellular localization"/>
    <property type="evidence" value="ECO:0000318"/>
    <property type="project" value="GO_Central"/>
</dbReference>
<dbReference type="GO" id="GO:0016032">
    <property type="term" value="P:viral process"/>
    <property type="evidence" value="ECO:0000304"/>
    <property type="project" value="ProtInc"/>
</dbReference>
<dbReference type="CDD" id="cd06403">
    <property type="entry name" value="PB1_Par6"/>
    <property type="match status" value="1"/>
</dbReference>
<dbReference type="CDD" id="cd06718">
    <property type="entry name" value="PDZ_Par6-like"/>
    <property type="match status" value="1"/>
</dbReference>
<dbReference type="FunFam" id="3.10.20.90:FF:000031">
    <property type="entry name" value="Partitioning defective 6 homolog alpha"/>
    <property type="match status" value="1"/>
</dbReference>
<dbReference type="FunFam" id="2.30.42.10:FF:000030">
    <property type="entry name" value="Partitioning defective 6 homolog beta"/>
    <property type="match status" value="1"/>
</dbReference>
<dbReference type="Gene3D" id="2.30.42.10">
    <property type="match status" value="1"/>
</dbReference>
<dbReference type="Gene3D" id="3.10.20.90">
    <property type="entry name" value="Phosphatidylinositol 3-kinase Catalytic Subunit, Chain A, domain 1"/>
    <property type="match status" value="1"/>
</dbReference>
<dbReference type="InterPro" id="IPR051741">
    <property type="entry name" value="PAR6_homolog"/>
</dbReference>
<dbReference type="InterPro" id="IPR053793">
    <property type="entry name" value="PB1-like"/>
</dbReference>
<dbReference type="InterPro" id="IPR000270">
    <property type="entry name" value="PB1_dom"/>
</dbReference>
<dbReference type="InterPro" id="IPR034868">
    <property type="entry name" value="PB1_Par6"/>
</dbReference>
<dbReference type="InterPro" id="IPR001478">
    <property type="entry name" value="PDZ"/>
</dbReference>
<dbReference type="InterPro" id="IPR036034">
    <property type="entry name" value="PDZ_sf"/>
</dbReference>
<dbReference type="PANTHER" id="PTHR14102">
    <property type="entry name" value="PAR-6-RELATED"/>
    <property type="match status" value="1"/>
</dbReference>
<dbReference type="PANTHER" id="PTHR14102:SF9">
    <property type="entry name" value="PARTITIONING DEFECTIVE 6 HOMOLOG ALPHA"/>
    <property type="match status" value="1"/>
</dbReference>
<dbReference type="Pfam" id="PF00564">
    <property type="entry name" value="PB1"/>
    <property type="match status" value="1"/>
</dbReference>
<dbReference type="Pfam" id="PF00595">
    <property type="entry name" value="PDZ"/>
    <property type="match status" value="1"/>
</dbReference>
<dbReference type="SMART" id="SM00666">
    <property type="entry name" value="PB1"/>
    <property type="match status" value="1"/>
</dbReference>
<dbReference type="SMART" id="SM00228">
    <property type="entry name" value="PDZ"/>
    <property type="match status" value="1"/>
</dbReference>
<dbReference type="SUPFAM" id="SSF54277">
    <property type="entry name" value="CAD &amp; PB1 domains"/>
    <property type="match status" value="1"/>
</dbReference>
<dbReference type="SUPFAM" id="SSF50156">
    <property type="entry name" value="PDZ domain-like"/>
    <property type="match status" value="1"/>
</dbReference>
<dbReference type="PROSITE" id="PS51745">
    <property type="entry name" value="PB1"/>
    <property type="match status" value="1"/>
</dbReference>
<dbReference type="PROSITE" id="PS50106">
    <property type="entry name" value="PDZ"/>
    <property type="match status" value="1"/>
</dbReference>
<reference key="1">
    <citation type="journal article" date="2000" name="J. Cell Sci.">
        <title>The mammalian homologue of the Caenorhabditis elegans polarity protein PAR-6 is a binding partner for the Rho GTPases Cdc42 and Rac1.</title>
        <authorList>
            <person name="Johansson A.-S."/>
            <person name="Driessens M."/>
            <person name="Aspenstroem P."/>
        </authorList>
    </citation>
    <scope>NUCLEOTIDE SEQUENCE [MRNA] (ISOFORM 1)</scope>
    <scope>CHARACTERIZATION</scope>
    <scope>INTERACTION WITH PARD3; CDC42 AND RAC1</scope>
    <source>
        <tissue>B-cell</tissue>
    </source>
</reference>
<reference key="2">
    <citation type="journal article" date="2000" name="Curr. Biol.">
        <title>A human homolog of the Caenorhabditis elegans polarity determinant Par-6 links Rac and Cdc42 to PKC-zeta signaling and cell transformation.</title>
        <authorList>
            <person name="Qiu R.-G."/>
            <person name="Abo A."/>
            <person name="Martin G.S."/>
        </authorList>
    </citation>
    <scope>NUCLEOTIDE SEQUENCE [MRNA] (ISOFORM 2)</scope>
    <scope>FUNCTION</scope>
    <scope>INTERACTION WITH CDC42; RAC1 AND PRKCZ</scope>
    <source>
        <tissue>Cervix carcinoma</tissue>
    </source>
</reference>
<reference key="3">
    <citation type="journal article" date="2000" name="Nat. Cell Biol.">
        <title>The cell-polarity protein Par6 links Par3 and atypical protein kinase C to Cdc42.</title>
        <authorList>
            <person name="Joberty G."/>
            <person name="Petersen C."/>
            <person name="Gao L."/>
            <person name="Macara I.G."/>
        </authorList>
    </citation>
    <scope>NUCLEOTIDE SEQUENCE [MRNA] (ISOFORM 2)</scope>
    <scope>INTERACTION WITH RHOQ</scope>
    <source>
        <tissue>Brain</tissue>
    </source>
</reference>
<reference key="4">
    <citation type="journal article" date="2001" name="J. Cell Biol.">
        <title>Atypical protein kinase C is involved in the evolutionarily conserved par protein complex and plays a critical role in establishing epithelia-specific junctional structures.</title>
        <authorList>
            <person name="Suzuki A."/>
            <person name="Yamanaka T."/>
            <person name="Hirose T."/>
            <person name="Manabe N."/>
            <person name="Mizuno K."/>
            <person name="Shimizu M."/>
            <person name="Akimoto K."/>
            <person name="Izumi Y."/>
            <person name="Ohnishi T."/>
            <person name="Ohno S."/>
        </authorList>
    </citation>
    <scope>NUCLEOTIDE SEQUENCE [MRNA] (ISOFORM 1)</scope>
    <scope>SUBUNIT OF A COMPLEX CONTAINING PARD3 AND PRKCI</scope>
    <source>
        <tissue>Kidney</tissue>
    </source>
</reference>
<reference key="5">
    <citation type="journal article" date="2001" name="Genes Cells">
        <title>Human homologues of the Caenorhabditis elegans cell polarity protein PAR6 as an adaptor that links the small GTPases Rac and Cdc42 to atypical protein kinase C.</title>
        <authorList>
            <person name="Noda Y."/>
            <person name="Takeya R."/>
            <person name="Ohno S."/>
            <person name="Naito S."/>
            <person name="Ito T."/>
            <person name="Sumimoto H."/>
        </authorList>
    </citation>
    <scope>NUCLEOTIDE SEQUENCE [MRNA] (ISOFORM 2)</scope>
    <scope>INTERACTION WITH RAC1; CDC42; PRKCI AND PRKCZ</scope>
    <source>
        <tissue>Neuroblastoma</tissue>
    </source>
</reference>
<reference key="6">
    <citation type="journal article" date="2004" name="Genome Res.">
        <title>The status, quality, and expansion of the NIH full-length cDNA project: the Mammalian Gene Collection (MGC).</title>
        <authorList>
            <consortium name="The MGC Project Team"/>
        </authorList>
    </citation>
    <scope>NUCLEOTIDE SEQUENCE [LARGE SCALE MRNA] (ISOFORM 2)</scope>
    <source>
        <tissue>Eye</tissue>
    </source>
</reference>
<reference key="7">
    <citation type="journal article" date="1998" name="Oncogene">
        <title>The C-terminus of the HTLV-1 Tax oncoprotein mediates interaction with the PDZ domain of cellular proteins.</title>
        <authorList>
            <person name="Rousset R."/>
            <person name="Fabre S."/>
            <person name="Desbois C."/>
            <person name="Bantignies F."/>
            <person name="Jalinot P."/>
        </authorList>
    </citation>
    <scope>NUCLEOTIDE SEQUENCE [MRNA] OF 115-345</scope>
    <scope>INTERACTION WITH HTLV-1 TAX</scope>
    <source>
        <tissue>Lymphocyte</tissue>
    </source>
</reference>
<reference key="8">
    <citation type="journal article" date="2003" name="Nat. Cell Biol.">
        <title>Direct interaction of two polarity complexes implicated in epithelial tight junction assembly.</title>
        <authorList>
            <person name="Hurd T.W."/>
            <person name="Gao L."/>
            <person name="Roh M.H."/>
            <person name="Macara I.G."/>
            <person name="Margolis B."/>
        </authorList>
    </citation>
    <scope>INTERACTION WITH PALS1</scope>
</reference>
<reference key="9">
    <citation type="journal article" date="2004" name="Mol. Biol. Cell">
        <title>CRB3 binds directly to Par6 and regulates the morphogenesis of the tight junctions in mammalian epithelial cells.</title>
        <authorList>
            <person name="Lemmers C."/>
            <person name="Michel D."/>
            <person name="Lane-Guermonprez L."/>
            <person name="Delgrossi M.-H."/>
            <person name="Medina E."/>
            <person name="Arsanto J.-P."/>
            <person name="Le Bivic A."/>
        </authorList>
    </citation>
    <scope>INTERACTION WITH CRB3</scope>
    <scope>DOMAIN</scope>
</reference>
<reference key="10">
    <citation type="journal article" date="2004" name="Mol. Cell. Biol.">
        <title>Nucleotide exchange factor ECT2 interacts with the polarity protein complex Par6/Par3/protein kinase Czeta (PKCzeta) and regulates PKCzeta activity.</title>
        <authorList>
            <person name="Liu X.F."/>
            <person name="Ishida H."/>
            <person name="Raziuddin R."/>
            <person name="Miki T."/>
        </authorList>
    </citation>
    <scope>INTERACTION WITH ECT2</scope>
</reference>
<reference key="11">
    <citation type="journal article" date="2005" name="Science">
        <title>Regulation of the polarity protein Par6 by TGFbeta receptors controls epithelial cell plasticity.</title>
        <authorList>
            <person name="Ozdamar B."/>
            <person name="Bose R."/>
            <person name="Barrios-Rodiles M."/>
            <person name="Wang H.R."/>
            <person name="Zhang Y."/>
            <person name="Wrana J.L."/>
        </authorList>
    </citation>
    <scope>INTERACTION WITH TGFBR1</scope>
    <scope>PHOSPHORYLATION BY TGF-BETA RECEPTOR</scope>
</reference>
<reference key="12">
    <citation type="journal article" date="2008" name="Mol. Cell">
        <title>Kinase-selective enrichment enables quantitative phosphoproteomics of the kinome across the cell cycle.</title>
        <authorList>
            <person name="Daub H."/>
            <person name="Olsen J.V."/>
            <person name="Bairlein M."/>
            <person name="Gnad F."/>
            <person name="Oppermann F.S."/>
            <person name="Korner R."/>
            <person name="Greff Z."/>
            <person name="Keri G."/>
            <person name="Stemmann O."/>
            <person name="Mann M."/>
        </authorList>
    </citation>
    <scope>PHOSPHORYLATION [LARGE SCALE ANALYSIS] AT SER-278</scope>
    <scope>IDENTIFICATION BY MASS SPECTROMETRY [LARGE SCALE ANALYSIS]</scope>
    <source>
        <tissue>Cervix carcinoma</tissue>
    </source>
</reference>
<reference key="13">
    <citation type="journal article" date="2008" name="Proc. Natl. Acad. Sci. U.S.A.">
        <title>A quantitative atlas of mitotic phosphorylation.</title>
        <authorList>
            <person name="Dephoure N."/>
            <person name="Zhou C."/>
            <person name="Villen J."/>
            <person name="Beausoleil S.A."/>
            <person name="Bakalarski C.E."/>
            <person name="Elledge S.J."/>
            <person name="Gygi S.P."/>
        </authorList>
    </citation>
    <scope>IDENTIFICATION BY MASS SPECTROMETRY [LARGE SCALE ANALYSIS]</scope>
    <source>
        <tissue>Cervix carcinoma</tissue>
    </source>
</reference>
<reference key="14">
    <citation type="journal article" date="2009" name="Oncogene">
        <title>Ect2 links the PKCiota-Par6alpha complex to Rac1 activation and cellular transformation.</title>
        <authorList>
            <person name="Justilien V."/>
            <person name="Fields A.P."/>
        </authorList>
    </citation>
    <scope>INTERACTION WITH ECT2 AND PRKCI</scope>
    <scope>MUTAGENESIS OF LYS-19</scope>
</reference>
<reference key="15">
    <citation type="journal article" date="2009" name="Sci. Signal.">
        <title>Quantitative phosphoproteomic analysis of T cell receptor signaling reveals system-wide modulation of protein-protein interactions.</title>
        <authorList>
            <person name="Mayya V."/>
            <person name="Lundgren D.H."/>
            <person name="Hwang S.-I."/>
            <person name="Rezaul K."/>
            <person name="Wu L."/>
            <person name="Eng J.K."/>
            <person name="Rodionov V."/>
            <person name="Han D.K."/>
        </authorList>
    </citation>
    <scope>IDENTIFICATION BY MASS SPECTROMETRY [LARGE SCALE ANALYSIS]</scope>
    <source>
        <tissue>Leukemic T-cell</tissue>
    </source>
</reference>
<reference key="16">
    <citation type="journal article" date="2010" name="Mol. Biol. Cell">
        <title>Par6 alpha interacts with the dynactin subunit p150 Glued and is a critical regulator of centrosomal protein recruitment.</title>
        <authorList>
            <person name="Kodani A."/>
            <person name="Tonthat V."/>
            <person name="Wu B."/>
            <person name="Suetterlin C."/>
        </authorList>
    </citation>
    <scope>FUNCTION</scope>
    <scope>SUBCELLULAR LOCATION</scope>
    <scope>INTERACTION WITH DCTN1 AND PCM1</scope>
</reference>
<reference key="17">
    <citation type="journal article" date="2013" name="J. Proteome Res.">
        <title>Toward a comprehensive characterization of a human cancer cell phosphoproteome.</title>
        <authorList>
            <person name="Zhou H."/>
            <person name="Di Palma S."/>
            <person name="Preisinger C."/>
            <person name="Peng M."/>
            <person name="Polat A.N."/>
            <person name="Heck A.J."/>
            <person name="Mohammed S."/>
        </authorList>
    </citation>
    <scope>PHOSPHORYLATION [LARGE SCALE ANALYSIS] AT SER-345</scope>
    <scope>IDENTIFICATION BY MASS SPECTROMETRY [LARGE SCALE ANALYSIS]</scope>
    <source>
        <tissue>Cervix carcinoma</tissue>
    </source>
</reference>
<reference key="18">
    <citation type="journal article" date="2013" name="PLoS ONE">
        <title>The centrosomal E3 ubiquitin ligase FBXO31-SCF regulates neuronal morphogenesis and migration.</title>
        <authorList>
            <person name="Vadhvani M."/>
            <person name="Schwedhelm-Domeyer N."/>
            <person name="Mukherjee C."/>
            <person name="Stegmueller J."/>
        </authorList>
    </citation>
    <scope>UBIQUITINATION</scope>
</reference>
<reference key="19">
    <citation type="journal article" date="2005" name="J. Biol. Chem.">
        <title>Structure of a cell polarity regulator, a complex between atypical PKC and Par6 PB1 domains.</title>
        <authorList>
            <person name="Hirano Y."/>
            <person name="Yoshinaga S."/>
            <person name="Takeya R."/>
            <person name="Suzuki N.N."/>
            <person name="Horiuchi M."/>
            <person name="Kohjima M."/>
            <person name="Sumimoto H."/>
            <person name="Inagaki F."/>
        </authorList>
    </citation>
    <scope>X-RAY CRYSTALLOGRAPHY (1.5 ANGSTROMS) OF 14-95 IN COMPLEX WITH PRKCI</scope>
    <scope>MUTAGENESIS OF LYS-19; ARG-28 AND ARG-89</scope>
</reference>
<feature type="chain" id="PRO_0000112513" description="Partitioning defective 6 homolog alpha">
    <location>
        <begin position="1"/>
        <end position="346"/>
    </location>
</feature>
<feature type="domain" description="PB1" evidence="4">
    <location>
        <begin position="15"/>
        <end position="95"/>
    </location>
</feature>
<feature type="domain" description="Pseudo-CRIB">
    <location>
        <begin position="133"/>
        <end position="150"/>
    </location>
</feature>
<feature type="domain" description="PDZ" evidence="3">
    <location>
        <begin position="157"/>
        <end position="250"/>
    </location>
</feature>
<feature type="region of interest" description="Interaction with PRKCI and PRKCZ">
    <location>
        <begin position="1"/>
        <end position="116"/>
    </location>
</feature>
<feature type="region of interest" description="Interaction with PARD3 and CDC42" evidence="1">
    <location>
        <begin position="126"/>
        <end position="253"/>
    </location>
</feature>
<feature type="region of interest" description="Disordered" evidence="5">
    <location>
        <begin position="257"/>
        <end position="346"/>
    </location>
</feature>
<feature type="modified residue" description="Phosphoserine" evidence="25">
    <location>
        <position position="278"/>
    </location>
</feature>
<feature type="modified residue" description="Phosphoserine" evidence="26">
    <location>
        <position position="345"/>
    </location>
</feature>
<feature type="splice variant" id="VSP_007459" description="In isoform 2." evidence="20 21 22 23">
    <location>
        <position position="96"/>
    </location>
</feature>
<feature type="sequence variant" id="VAR_050454" description="In dbSNP:rs35356834.">
    <original>V</original>
    <variation>I</variation>
    <location>
        <position position="286"/>
    </location>
</feature>
<feature type="mutagenesis site" description="Loss of interaction with ECT2 and PRKCI." evidence="14 16">
    <original>K</original>
    <variation>A</variation>
    <location>
        <position position="19"/>
    </location>
</feature>
<feature type="mutagenesis site" description="Slight decrease of interaction with PRKCI. Loss of interaction with PRKCI; when associated with A-89." evidence="14">
    <original>R</original>
    <variation>A</variation>
    <location>
        <position position="28"/>
    </location>
</feature>
<feature type="mutagenesis site" description="Slight decrease of interaction with PRKCI. Loss of interaction with PRKCI; when associated with A-28." evidence="14">
    <original>R</original>
    <variation>A</variation>
    <location>
        <position position="89"/>
    </location>
</feature>
<feature type="strand" evidence="27">
    <location>
        <begin position="15"/>
        <end position="22"/>
    </location>
</feature>
<feature type="strand" evidence="27">
    <location>
        <begin position="25"/>
        <end position="32"/>
    </location>
</feature>
<feature type="helix" evidence="27">
    <location>
        <begin position="33"/>
        <end position="35"/>
    </location>
</feature>
<feature type="helix" evidence="27">
    <location>
        <begin position="39"/>
        <end position="49"/>
    </location>
</feature>
<feature type="strand" evidence="27">
    <location>
        <begin position="58"/>
        <end position="62"/>
    </location>
</feature>
<feature type="strand" evidence="27">
    <location>
        <begin position="68"/>
        <end position="70"/>
    </location>
</feature>
<feature type="helix" evidence="27">
    <location>
        <begin position="74"/>
        <end position="80"/>
    </location>
</feature>
<feature type="strand" evidence="27">
    <location>
        <begin position="83"/>
        <end position="86"/>
    </location>
</feature>
<feature type="strand" evidence="27">
    <location>
        <begin position="88"/>
        <end position="93"/>
    </location>
</feature>
<evidence type="ECO:0000250" key="1"/>
<evidence type="ECO:0000250" key="2">
    <source>
        <dbReference type="UniProtKB" id="Q9Z101"/>
    </source>
</evidence>
<evidence type="ECO:0000255" key="3">
    <source>
        <dbReference type="PROSITE-ProRule" id="PRU00143"/>
    </source>
</evidence>
<evidence type="ECO:0000255" key="4">
    <source>
        <dbReference type="PROSITE-ProRule" id="PRU01081"/>
    </source>
</evidence>
<evidence type="ECO:0000256" key="5">
    <source>
        <dbReference type="SAM" id="MobiDB-lite"/>
    </source>
</evidence>
<evidence type="ECO:0000269" key="6">
    <source>
    </source>
</evidence>
<evidence type="ECO:0000269" key="7">
    <source>
    </source>
</evidence>
<evidence type="ECO:0000269" key="8">
    <source>
    </source>
</evidence>
<evidence type="ECO:0000269" key="9">
    <source>
    </source>
</evidence>
<evidence type="ECO:0000269" key="10">
    <source>
    </source>
</evidence>
<evidence type="ECO:0000269" key="11">
    <source>
    </source>
</evidence>
<evidence type="ECO:0000269" key="12">
    <source>
    </source>
</evidence>
<evidence type="ECO:0000269" key="13">
    <source>
    </source>
</evidence>
<evidence type="ECO:0000269" key="14">
    <source>
    </source>
</evidence>
<evidence type="ECO:0000269" key="15">
    <source>
    </source>
</evidence>
<evidence type="ECO:0000269" key="16">
    <source>
    </source>
</evidence>
<evidence type="ECO:0000269" key="17">
    <source>
    </source>
</evidence>
<evidence type="ECO:0000269" key="18">
    <source>
    </source>
</evidence>
<evidence type="ECO:0000269" key="19">
    <source>
    </source>
</evidence>
<evidence type="ECO:0000303" key="20">
    <source>
    </source>
</evidence>
<evidence type="ECO:0000303" key="21">
    <source>
    </source>
</evidence>
<evidence type="ECO:0000303" key="22">
    <source>
    </source>
</evidence>
<evidence type="ECO:0000303" key="23">
    <source>
    </source>
</evidence>
<evidence type="ECO:0000305" key="24"/>
<evidence type="ECO:0007744" key="25">
    <source>
    </source>
</evidence>
<evidence type="ECO:0007744" key="26">
    <source>
    </source>
</evidence>
<evidence type="ECO:0007829" key="27">
    <source>
        <dbReference type="PDB" id="1WMH"/>
    </source>
</evidence>
<protein>
    <recommendedName>
        <fullName>Partitioning defective 6 homolog alpha</fullName>
        <shortName>PAR-6</shortName>
        <shortName>PAR-6 alpha</shortName>
        <shortName>PAR-6A</shortName>
    </recommendedName>
    <alternativeName>
        <fullName>PAR6C</fullName>
    </alternativeName>
    <alternativeName>
        <fullName>Tax interaction protein 40</fullName>
        <shortName>TIP-40</shortName>
    </alternativeName>
</protein>
<gene>
    <name type="primary">PARD6A</name>
    <name type="synonym">PAR6A</name>
</gene>
<comment type="function">
    <text evidence="6 17">Adapter protein involved in asymmetrical cell division and cell polarization processes. Probably involved in the formation of epithelial tight junctions. Association with PARD3 may prevent the interaction of PARD3 with F11R/JAM1, thereby preventing tight junction assembly. The PARD6-PARD3 complex links GTP-bound Rho small GTPases to atypical protein kinase C proteins (PubMed:10873802). Regulates centrosome organization and function. Essential for the centrosomal recruitment of key proteins that control centrosomal microtubule organization (PubMed:20719959).</text>
</comment>
<comment type="subunit">
    <text evidence="2 6 7 8 9 10 11 12 13 14 15 16 17 19">Interacts with MAP2K5 (By similarity). Interacts with PARD3. Interacts with GTP-bound forms of CDC42, RHOQ/TC10 and RAC1. Interacts with the N-terminal part of PRKCI and PRKCZ. Part of a complex with PARD3, CDC42 or RAC1 and PRKCI or PRKCZ. Part of a complex with LLGL1 and PRKCI (By similarity). Interacts with human T-cell leukemia virus type I TAX protein. Interacts with PALS1 and CRB3. Interacts with TGFBR1; involved in TGF-beta induced epithelial to mesenchymal transition. Interacts with ECT2 ('Thr-359' phosphorylated form) and PRKCI. Interacts with DCTN1 and PCM1 (PubMed:20719959).</text>
</comment>
<comment type="interaction">
    <interactant intactId="EBI-81876">
        <id>Q9NPB6</id>
    </interactant>
    <interactant intactId="EBI-81752">
        <id>P60953</id>
        <label>CDC42</label>
    </interactant>
    <organismsDiffer>false</organismsDiffer>
    <experiments>7</experiments>
</comment>
<comment type="interaction">
    <interactant intactId="EBI-81876">
        <id>Q9NPB6</id>
    </interactant>
    <interactant intactId="EBI-2903122">
        <id>P33151</id>
        <label>CDH5</label>
    </interactant>
    <organismsDiffer>false</organismsDiffer>
    <experiments>4</experiments>
</comment>
<comment type="interaction">
    <interactant intactId="EBI-81876">
        <id>Q9NPB6</id>
    </interactant>
    <interactant intactId="EBI-81968">
        <id>Q8TEW0</id>
        <label>PARD3</label>
    </interactant>
    <organismsDiffer>false</organismsDiffer>
    <experiments>9</experiments>
</comment>
<comment type="interaction">
    <interactant intactId="EBI-81876">
        <id>Q9NPB6</id>
    </interactant>
    <interactant intactId="EBI-302345">
        <id>Q8ND90</id>
        <label>PNMA1</label>
    </interactant>
    <organismsDiffer>false</organismsDiffer>
    <experiments>2</experiments>
</comment>
<comment type="interaction">
    <interactant intactId="EBI-81876">
        <id>Q9NPB6</id>
    </interactant>
    <interactant intactId="EBI-286199">
        <id>P41743</id>
        <label>PRKCI</label>
    </interactant>
    <organismsDiffer>false</organismsDiffer>
    <experiments>17</experiments>
</comment>
<comment type="interaction">
    <interactant intactId="EBI-81876">
        <id>Q9NPB6</id>
    </interactant>
    <interactant intactId="EBI-295351">
        <id>Q05513</id>
        <label>PRKCZ</label>
    </interactant>
    <organismsDiffer>false</organismsDiffer>
    <experiments>10</experiments>
</comment>
<comment type="interaction">
    <interactant intactId="EBI-81876">
        <id>Q9NPB6</id>
    </interactant>
    <interactant intactId="EBI-413628">
        <id>P63000</id>
        <label>RAC1</label>
    </interactant>
    <organismsDiffer>false</organismsDiffer>
    <experiments>2</experiments>
</comment>
<comment type="interaction">
    <interactant intactId="EBI-81876">
        <id>Q9NPB6</id>
    </interactant>
    <interactant intactId="EBI-306940">
        <id>Q04917</id>
        <label>YWHAH</label>
    </interactant>
    <organismsDiffer>false</organismsDiffer>
    <experiments>2</experiments>
</comment>
<comment type="interaction">
    <interactant intactId="EBI-10693102">
        <id>Q9NPB6-2</id>
    </interactant>
    <interactant intactId="EBI-401755">
        <id>P62993</id>
        <label>GRB2</label>
    </interactant>
    <organismsDiffer>false</organismsDiffer>
    <experiments>3</experiments>
</comment>
<comment type="interaction">
    <interactant intactId="EBI-10693102">
        <id>Q9NPB6-2</id>
    </interactant>
    <interactant intactId="EBI-79893">
        <id>Q92569</id>
        <label>PIK3R3</label>
    </interactant>
    <organismsDiffer>false</organismsDiffer>
    <experiments>3</experiments>
</comment>
<comment type="interaction">
    <interactant intactId="EBI-10693102">
        <id>Q9NPB6-2</id>
    </interactant>
    <interactant intactId="EBI-286199">
        <id>P41743</id>
        <label>PRKCI</label>
    </interactant>
    <organismsDiffer>false</organismsDiffer>
    <experiments>3</experiments>
</comment>
<comment type="interaction">
    <interactant intactId="EBI-10693102">
        <id>Q9NPB6-2</id>
    </interactant>
    <interactant intactId="EBI-2860264">
        <id>Q16825</id>
        <label>PTPN21</label>
    </interactant>
    <organismsDiffer>false</organismsDiffer>
    <experiments>3</experiments>
</comment>
<comment type="subcellular location">
    <subcellularLocation>
        <location>Cytoplasm</location>
    </subcellularLocation>
    <subcellularLocation>
        <location>Cell membrane</location>
    </subcellularLocation>
    <subcellularLocation>
        <location>Cell projection</location>
        <location>Ruffle</location>
    </subcellularLocation>
    <subcellularLocation>
        <location>Cell junction</location>
        <location>Tight junction</location>
    </subcellularLocation>
    <subcellularLocation>
        <location evidence="17">Cytoplasm</location>
        <location evidence="17">Cytoskeleton</location>
        <location evidence="17">Microtubule organizing center</location>
        <location evidence="17">Centrosome</location>
        <location evidence="17">Centriolar satellite</location>
    </subcellularLocation>
    <subcellularLocation>
        <location evidence="17">Cytoplasm</location>
        <location evidence="17">Cytoskeleton</location>
        <location evidence="17">Microtubule organizing center</location>
        <location evidence="17">Centrosome</location>
    </subcellularLocation>
    <text evidence="17">Colocalizes with GTP-bound CDC42 or RAC1 at membrane ruffles and with PARD3 and PRKCI at epithelial tight junctions. Recruited to the centrosome by a microtubule and dynein-dynactin-dependent mechanism.</text>
</comment>
<comment type="alternative products">
    <event type="alternative splicing"/>
    <isoform>
        <id>Q9NPB6-1</id>
        <name>1</name>
        <sequence type="displayed"/>
    </isoform>
    <isoform>
        <id>Q9NPB6-2</id>
        <name>2</name>
        <sequence type="described" ref="VSP_007459"/>
    </isoform>
</comment>
<comment type="tissue specificity">
    <text>Expressed in pancreas, skeletal muscle, brain and heart. Weakly expressed in kidney and placenta.</text>
</comment>
<comment type="domain">
    <text evidence="1">The pseudo-CRIB domain together with the PDZ domain is required for the interaction with Rho small GTPases.</text>
</comment>
<comment type="domain">
    <text evidence="1">The PB1 domain mediates interactions with MAP2K5.</text>
</comment>
<comment type="domain">
    <text evidence="12">The PDZ domain mediates the interaction with CRB3.</text>
</comment>
<comment type="PTM">
    <text evidence="2">Phosphorylated by the TGF-beta receptor.</text>
</comment>
<comment type="PTM">
    <text evidence="18">Ubiquitinated by the SCF(FBXO31) complex, leading to its proteasomal degradation.</text>
</comment>
<comment type="similarity">
    <text evidence="24">Belongs to the PAR6 family.</text>
</comment>
<accession>Q9NPB6</accession>
<accession>O14911</accession>
<accession>Q9NPJ7</accession>